<reference key="1">
    <citation type="journal article" date="2008" name="J. Bacteriol.">
        <title>The pangenome structure of Escherichia coli: comparative genomic analysis of E. coli commensal and pathogenic isolates.</title>
        <authorList>
            <person name="Rasko D.A."/>
            <person name="Rosovitz M.J."/>
            <person name="Myers G.S.A."/>
            <person name="Mongodin E.F."/>
            <person name="Fricke W.F."/>
            <person name="Gajer P."/>
            <person name="Crabtree J."/>
            <person name="Sebaihia M."/>
            <person name="Thomson N.R."/>
            <person name="Chaudhuri R."/>
            <person name="Henderson I.R."/>
            <person name="Sperandio V."/>
            <person name="Ravel J."/>
        </authorList>
    </citation>
    <scope>NUCLEOTIDE SEQUENCE [LARGE SCALE GENOMIC DNA]</scope>
    <source>
        <strain>HS</strain>
    </source>
</reference>
<gene>
    <name evidence="1" type="primary">pckA</name>
    <name type="ordered locus">EcHS_A3600</name>
</gene>
<evidence type="ECO:0000255" key="1">
    <source>
        <dbReference type="HAMAP-Rule" id="MF_00453"/>
    </source>
</evidence>
<feature type="chain" id="PRO_1000060302" description="Phosphoenolpyruvate carboxykinase (ATP)">
    <location>
        <begin position="1"/>
        <end position="540"/>
    </location>
</feature>
<feature type="binding site" evidence="1">
    <location>
        <position position="65"/>
    </location>
    <ligand>
        <name>substrate</name>
    </ligand>
</feature>
<feature type="binding site" evidence="1">
    <location>
        <position position="207"/>
    </location>
    <ligand>
        <name>substrate</name>
    </ligand>
</feature>
<feature type="binding site" evidence="1">
    <location>
        <position position="213"/>
    </location>
    <ligand>
        <name>ATP</name>
        <dbReference type="ChEBI" id="CHEBI:30616"/>
    </ligand>
</feature>
<feature type="binding site" evidence="1">
    <location>
        <position position="213"/>
    </location>
    <ligand>
        <name>Mn(2+)</name>
        <dbReference type="ChEBI" id="CHEBI:29035"/>
    </ligand>
</feature>
<feature type="binding site" evidence="1">
    <location>
        <position position="213"/>
    </location>
    <ligand>
        <name>substrate</name>
    </ligand>
</feature>
<feature type="binding site" evidence="1">
    <location>
        <position position="232"/>
    </location>
    <ligand>
        <name>ATP</name>
        <dbReference type="ChEBI" id="CHEBI:30616"/>
    </ligand>
</feature>
<feature type="binding site" evidence="1">
    <location>
        <position position="232"/>
    </location>
    <ligand>
        <name>Mn(2+)</name>
        <dbReference type="ChEBI" id="CHEBI:29035"/>
    </ligand>
</feature>
<feature type="binding site" evidence="1">
    <location>
        <begin position="248"/>
        <end position="256"/>
    </location>
    <ligand>
        <name>ATP</name>
        <dbReference type="ChEBI" id="CHEBI:30616"/>
    </ligand>
</feature>
<feature type="binding site" evidence="1">
    <location>
        <position position="269"/>
    </location>
    <ligand>
        <name>Mn(2+)</name>
        <dbReference type="ChEBI" id="CHEBI:29035"/>
    </ligand>
</feature>
<feature type="binding site" evidence="1">
    <location>
        <position position="297"/>
    </location>
    <ligand>
        <name>ATP</name>
        <dbReference type="ChEBI" id="CHEBI:30616"/>
    </ligand>
</feature>
<feature type="binding site" evidence="1">
    <location>
        <position position="333"/>
    </location>
    <ligand>
        <name>ATP</name>
        <dbReference type="ChEBI" id="CHEBI:30616"/>
    </ligand>
</feature>
<feature type="binding site" evidence="1">
    <location>
        <position position="333"/>
    </location>
    <ligand>
        <name>substrate</name>
    </ligand>
</feature>
<feature type="binding site" evidence="1">
    <location>
        <begin position="449"/>
        <end position="450"/>
    </location>
    <ligand>
        <name>ATP</name>
        <dbReference type="ChEBI" id="CHEBI:30616"/>
    </ligand>
</feature>
<feature type="binding site" evidence="1">
    <location>
        <position position="455"/>
    </location>
    <ligand>
        <name>ATP</name>
        <dbReference type="ChEBI" id="CHEBI:30616"/>
    </ligand>
</feature>
<feature type="modified residue" description="N6-acetyllysine" evidence="1">
    <location>
        <position position="87"/>
    </location>
</feature>
<feature type="modified residue" description="N6-acetyllysine" evidence="1">
    <location>
        <position position="523"/>
    </location>
</feature>
<organism>
    <name type="scientific">Escherichia coli O9:H4 (strain HS)</name>
    <dbReference type="NCBI Taxonomy" id="331112"/>
    <lineage>
        <taxon>Bacteria</taxon>
        <taxon>Pseudomonadati</taxon>
        <taxon>Pseudomonadota</taxon>
        <taxon>Gammaproteobacteria</taxon>
        <taxon>Enterobacterales</taxon>
        <taxon>Enterobacteriaceae</taxon>
        <taxon>Escherichia</taxon>
    </lineage>
</organism>
<protein>
    <recommendedName>
        <fullName evidence="1">Phosphoenolpyruvate carboxykinase (ATP)</fullName>
        <shortName evidence="1">PCK</shortName>
        <shortName evidence="1">PEP carboxykinase</shortName>
        <shortName evidence="1">PEPCK</shortName>
        <ecNumber evidence="1">4.1.1.49</ecNumber>
    </recommendedName>
</protein>
<keyword id="KW-0007">Acetylation</keyword>
<keyword id="KW-0067">ATP-binding</keyword>
<keyword id="KW-0963">Cytoplasm</keyword>
<keyword id="KW-0210">Decarboxylase</keyword>
<keyword id="KW-0312">Gluconeogenesis</keyword>
<keyword id="KW-0456">Lyase</keyword>
<keyword id="KW-0464">Manganese</keyword>
<keyword id="KW-0479">Metal-binding</keyword>
<keyword id="KW-0547">Nucleotide-binding</keyword>
<name>PCKA_ECOHS</name>
<sequence>MRVNNGLTPQELEAYGISDVHDIVYNPSYDLLYQEELDPSLTGYERGVLTNLGAVAVDTGIFTGRSPKDKYIVRDDTTRDTFWWADKGKGKNDNKPLSPETWQHLKGLVTRQLSGKRLFVVDAFCGANPDTRLSVRFITEVAWQAHFVKNMFIRPSDEELAGFKPDFIVMNGAKCTNPQWKEQGLNSENFVAFNLTERMQLIGGTWYGGEMKKGMFSMMNYLLPLKGIASMHCSANVGEKGDVAVFFGLSGTGKTTLSTDPKRRLIGDDEHGWDDDGVFNFEGGCYAKTIKLSKEAEPEIYNAIRRDALLENVTVREDGTIDFDDGSKTENTRVSYPIYHIDNIVKPVSKAGHATKVIFLTADAFGVLPPVSRLTADQTQYHFLSGFTAKLAGTERGITEPTPTFSACFGAAFLSLHPTQYAEVLVKRMQAAGAQAYLVNTGWNGTGKRISIKDTRAIIDAILNGSLDNAETFTLPMFNLAIPTELPGVDTKILDPRNTYASPEQWQEKAETLAKLFIDNFDKYTDTPAGAALVAAGPKL</sequence>
<dbReference type="EC" id="4.1.1.49" evidence="1"/>
<dbReference type="EMBL" id="CP000802">
    <property type="protein sequence ID" value="ABV07815.1"/>
    <property type="molecule type" value="Genomic_DNA"/>
</dbReference>
<dbReference type="RefSeq" id="WP_001265681.1">
    <property type="nucleotide sequence ID" value="NC_009800.1"/>
</dbReference>
<dbReference type="SMR" id="A8A5L1"/>
<dbReference type="KEGG" id="ecx:EcHS_A3600"/>
<dbReference type="HOGENOM" id="CLU_018247_0_1_6"/>
<dbReference type="UniPathway" id="UPA00138"/>
<dbReference type="GO" id="GO:0005829">
    <property type="term" value="C:cytosol"/>
    <property type="evidence" value="ECO:0007669"/>
    <property type="project" value="TreeGrafter"/>
</dbReference>
<dbReference type="GO" id="GO:0005524">
    <property type="term" value="F:ATP binding"/>
    <property type="evidence" value="ECO:0007669"/>
    <property type="project" value="UniProtKB-UniRule"/>
</dbReference>
<dbReference type="GO" id="GO:0046872">
    <property type="term" value="F:metal ion binding"/>
    <property type="evidence" value="ECO:0007669"/>
    <property type="project" value="UniProtKB-KW"/>
</dbReference>
<dbReference type="GO" id="GO:0004612">
    <property type="term" value="F:phosphoenolpyruvate carboxykinase (ATP) activity"/>
    <property type="evidence" value="ECO:0007669"/>
    <property type="project" value="UniProtKB-UniRule"/>
</dbReference>
<dbReference type="GO" id="GO:0006094">
    <property type="term" value="P:gluconeogenesis"/>
    <property type="evidence" value="ECO:0007669"/>
    <property type="project" value="UniProtKB-UniRule"/>
</dbReference>
<dbReference type="CDD" id="cd00484">
    <property type="entry name" value="PEPCK_ATP"/>
    <property type="match status" value="1"/>
</dbReference>
<dbReference type="FunFam" id="2.170.8.10:FF:000001">
    <property type="entry name" value="Phosphoenolpyruvate carboxykinase (ATP)"/>
    <property type="match status" value="1"/>
</dbReference>
<dbReference type="FunFam" id="3.40.449.10:FF:000001">
    <property type="entry name" value="Phosphoenolpyruvate carboxykinase (ATP)"/>
    <property type="match status" value="1"/>
</dbReference>
<dbReference type="Gene3D" id="3.90.228.20">
    <property type="match status" value="1"/>
</dbReference>
<dbReference type="Gene3D" id="3.40.449.10">
    <property type="entry name" value="Phosphoenolpyruvate Carboxykinase, domain 1"/>
    <property type="match status" value="1"/>
</dbReference>
<dbReference type="Gene3D" id="2.170.8.10">
    <property type="entry name" value="Phosphoenolpyruvate Carboxykinase, domain 2"/>
    <property type="match status" value="1"/>
</dbReference>
<dbReference type="HAMAP" id="MF_00453">
    <property type="entry name" value="PEPCK_ATP"/>
    <property type="match status" value="1"/>
</dbReference>
<dbReference type="InterPro" id="IPR001272">
    <property type="entry name" value="PEP_carboxykinase_ATP"/>
</dbReference>
<dbReference type="InterPro" id="IPR013035">
    <property type="entry name" value="PEP_carboxykinase_C"/>
</dbReference>
<dbReference type="InterPro" id="IPR008210">
    <property type="entry name" value="PEP_carboxykinase_N"/>
</dbReference>
<dbReference type="InterPro" id="IPR015994">
    <property type="entry name" value="PEPCK_ATP_CS"/>
</dbReference>
<dbReference type="NCBIfam" id="TIGR00224">
    <property type="entry name" value="pckA"/>
    <property type="match status" value="1"/>
</dbReference>
<dbReference type="NCBIfam" id="NF006819">
    <property type="entry name" value="PRK09344.1-1"/>
    <property type="match status" value="1"/>
</dbReference>
<dbReference type="NCBIfam" id="NF006820">
    <property type="entry name" value="PRK09344.1-2"/>
    <property type="match status" value="1"/>
</dbReference>
<dbReference type="NCBIfam" id="NF006821">
    <property type="entry name" value="PRK09344.1-3"/>
    <property type="match status" value="1"/>
</dbReference>
<dbReference type="PANTHER" id="PTHR30031:SF0">
    <property type="entry name" value="PHOSPHOENOLPYRUVATE CARBOXYKINASE (ATP)"/>
    <property type="match status" value="1"/>
</dbReference>
<dbReference type="PANTHER" id="PTHR30031">
    <property type="entry name" value="PHOSPHOENOLPYRUVATE CARBOXYKINASE ATP"/>
    <property type="match status" value="1"/>
</dbReference>
<dbReference type="Pfam" id="PF01293">
    <property type="entry name" value="PEPCK_ATP"/>
    <property type="match status" value="1"/>
</dbReference>
<dbReference type="PIRSF" id="PIRSF006294">
    <property type="entry name" value="PEP_crbxkin"/>
    <property type="match status" value="1"/>
</dbReference>
<dbReference type="SUPFAM" id="SSF68923">
    <property type="entry name" value="PEP carboxykinase N-terminal domain"/>
    <property type="match status" value="1"/>
</dbReference>
<dbReference type="SUPFAM" id="SSF53795">
    <property type="entry name" value="PEP carboxykinase-like"/>
    <property type="match status" value="1"/>
</dbReference>
<dbReference type="PROSITE" id="PS00532">
    <property type="entry name" value="PEPCK_ATP"/>
    <property type="match status" value="1"/>
</dbReference>
<proteinExistence type="inferred from homology"/>
<accession>A8A5L1</accession>
<comment type="function">
    <text evidence="1">Involved in the gluconeogenesis. Catalyzes the conversion of oxaloacetate (OAA) to phosphoenolpyruvate (PEP) through direct phosphoryl transfer between the nucleoside triphosphate and OAA.</text>
</comment>
<comment type="catalytic activity">
    <reaction evidence="1">
        <text>oxaloacetate + ATP = phosphoenolpyruvate + ADP + CO2</text>
        <dbReference type="Rhea" id="RHEA:18617"/>
        <dbReference type="ChEBI" id="CHEBI:16452"/>
        <dbReference type="ChEBI" id="CHEBI:16526"/>
        <dbReference type="ChEBI" id="CHEBI:30616"/>
        <dbReference type="ChEBI" id="CHEBI:58702"/>
        <dbReference type="ChEBI" id="CHEBI:456216"/>
        <dbReference type="EC" id="4.1.1.49"/>
    </reaction>
</comment>
<comment type="cofactor">
    <cofactor evidence="1">
        <name>Mn(2+)</name>
        <dbReference type="ChEBI" id="CHEBI:29035"/>
    </cofactor>
    <text evidence="1">Binds 1 Mn(2+) ion per subunit.</text>
</comment>
<comment type="pathway">
    <text evidence="1">Carbohydrate biosynthesis; gluconeogenesis.</text>
</comment>
<comment type="subunit">
    <text evidence="1">Monomer.</text>
</comment>
<comment type="subcellular location">
    <subcellularLocation>
        <location evidence="1">Cytoplasm</location>
    </subcellularLocation>
</comment>
<comment type="similarity">
    <text evidence="1">Belongs to the phosphoenolpyruvate carboxykinase (ATP) family.</text>
</comment>